<gene>
    <name evidence="2" type="primary">mwoIM</name>
</gene>
<keyword id="KW-0238">DNA-binding</keyword>
<keyword id="KW-0489">Methyltransferase</keyword>
<keyword id="KW-0680">Restriction system</keyword>
<keyword id="KW-0949">S-adenosyl-L-methionine</keyword>
<keyword id="KW-0808">Transferase</keyword>
<reference key="1">
    <citation type="patent" date="1991-10-01" number="US5053330">
        <title>Method for producing the MwoI restriction endonuclease and methylase.</title>
        <authorList>
            <person name="Lunnen K.D."/>
            <person name="Wilson G.G."/>
        </authorList>
    </citation>
    <scope>NUCLEOTIDE SEQUENCE [GENOMIC DNA]</scope>
    <source>
        <strain>ATCC 43096 / DSM 2970 / JCM 14652 / NBRC 100332 / VKM B-1829</strain>
    </source>
</reference>
<reference key="2">
    <citation type="journal article" date="1989" name="Gene">
        <title>Characterization and cloning of MwoI (GCN7GC), a new type-II restriction-modification system from Methanobacterium wolfei.</title>
        <authorList>
            <person name="Lunnen K.D."/>
            <person name="Morgan R.D."/>
            <person name="Timan C.J."/>
            <person name="Krzycki J.A."/>
            <person name="Reeve J.N."/>
            <person name="Wilson G.G."/>
        </authorList>
    </citation>
    <scope>FUNCTION</scope>
    <source>
        <strain>ATCC 43096 / DSM 2970 / JCM 14652 / NBRC 100332 / VKM B-1829</strain>
    </source>
</reference>
<reference key="3">
    <citation type="journal article" date="2003" name="Nucleic Acids Res.">
        <title>A nomenclature for restriction enzymes, DNA methyltransferases, homing endonucleases and their genes.</title>
        <authorList>
            <person name="Roberts R.J."/>
            <person name="Belfort M."/>
            <person name="Bestor T."/>
            <person name="Bhagwat A.S."/>
            <person name="Bickle T.A."/>
            <person name="Bitinaite J."/>
            <person name="Blumenthal R.M."/>
            <person name="Degtyarev S.K."/>
            <person name="Dryden D.T."/>
            <person name="Dybvig K."/>
            <person name="Firman K."/>
            <person name="Gromova E.S."/>
            <person name="Gumport R.I."/>
            <person name="Halford S.E."/>
            <person name="Hattman S."/>
            <person name="Heitman J."/>
            <person name="Hornby D.P."/>
            <person name="Janulaitis A."/>
            <person name="Jeltsch A."/>
            <person name="Josephsen J."/>
            <person name="Kiss A."/>
            <person name="Klaenhammer T.R."/>
            <person name="Kobayashi I."/>
            <person name="Kong H."/>
            <person name="Krueger D.H."/>
            <person name="Lacks S."/>
            <person name="Marinus M.G."/>
            <person name="Miyahara M."/>
            <person name="Morgan R.D."/>
            <person name="Murray N.E."/>
            <person name="Nagaraja V."/>
            <person name="Piekarowicz A."/>
            <person name="Pingoud A."/>
            <person name="Raleigh E."/>
            <person name="Rao D.N."/>
            <person name="Reich N."/>
            <person name="Repin V.E."/>
            <person name="Selker E.U."/>
            <person name="Shaw P.C."/>
            <person name="Stein D.C."/>
            <person name="Stoddard B.L."/>
            <person name="Szybalski W."/>
            <person name="Trautner T.A."/>
            <person name="Van Etten J.L."/>
            <person name="Vitor J.M."/>
            <person name="Wilson G.G."/>
            <person name="Xu S.Y."/>
        </authorList>
    </citation>
    <scope>NOMENCLATURE</scope>
    <scope>SUBTYPE</scope>
</reference>
<dbReference type="EC" id="2.1.1.113"/>
<dbReference type="EMBL" id="AF051376">
    <property type="protein sequence ID" value="AAC05700.1"/>
    <property type="molecule type" value="Genomic_DNA"/>
</dbReference>
<dbReference type="RefSeq" id="WP_261599398.1">
    <property type="nucleotide sequence ID" value="NZ_CP104550.1"/>
</dbReference>
<dbReference type="SMR" id="O59647"/>
<dbReference type="GeneID" id="75106709"/>
<dbReference type="BRENDA" id="2.1.1.113">
    <property type="organism ID" value="3258"/>
</dbReference>
<dbReference type="PRO" id="PR:O59647"/>
<dbReference type="GO" id="GO:0003677">
    <property type="term" value="F:DNA binding"/>
    <property type="evidence" value="ECO:0007669"/>
    <property type="project" value="UniProtKB-KW"/>
</dbReference>
<dbReference type="GO" id="GO:0008170">
    <property type="term" value="F:N-methyltransferase activity"/>
    <property type="evidence" value="ECO:0007669"/>
    <property type="project" value="InterPro"/>
</dbReference>
<dbReference type="GO" id="GO:0015667">
    <property type="term" value="F:site-specific DNA-methyltransferase (cytosine-N4-specific) activity"/>
    <property type="evidence" value="ECO:0007669"/>
    <property type="project" value="UniProtKB-EC"/>
</dbReference>
<dbReference type="GO" id="GO:0009307">
    <property type="term" value="P:DNA restriction-modification system"/>
    <property type="evidence" value="ECO:0007669"/>
    <property type="project" value="UniProtKB-KW"/>
</dbReference>
<dbReference type="GO" id="GO:0032259">
    <property type="term" value="P:methylation"/>
    <property type="evidence" value="ECO:0007669"/>
    <property type="project" value="UniProtKB-KW"/>
</dbReference>
<dbReference type="Gene3D" id="3.40.50.150">
    <property type="entry name" value="Vaccinia Virus protein VP39"/>
    <property type="match status" value="1"/>
</dbReference>
<dbReference type="InterPro" id="IPR002941">
    <property type="entry name" value="DNA_methylase_N4/N6"/>
</dbReference>
<dbReference type="InterPro" id="IPR017985">
    <property type="entry name" value="MeTrfase_CN4_CS"/>
</dbReference>
<dbReference type="InterPro" id="IPR001091">
    <property type="entry name" value="RM_Methyltransferase"/>
</dbReference>
<dbReference type="InterPro" id="IPR029063">
    <property type="entry name" value="SAM-dependent_MTases_sf"/>
</dbReference>
<dbReference type="Pfam" id="PF01555">
    <property type="entry name" value="N6_N4_Mtase"/>
    <property type="match status" value="1"/>
</dbReference>
<dbReference type="PRINTS" id="PR00508">
    <property type="entry name" value="S21N4MTFRASE"/>
</dbReference>
<dbReference type="SUPFAM" id="SSF53335">
    <property type="entry name" value="S-adenosyl-L-methionine-dependent methyltransferases"/>
    <property type="match status" value="1"/>
</dbReference>
<dbReference type="PROSITE" id="PS00093">
    <property type="entry name" value="N4_MTASE"/>
    <property type="match status" value="1"/>
</dbReference>
<proteinExistence type="inferred from homology"/>
<feature type="chain" id="PRO_0000087930" description="Type II methyltransferase M.MwoI">
    <location>
        <begin position="1"/>
        <end position="668"/>
    </location>
</feature>
<sequence>MVKGKILFGDVFSALRCLEDNSISVALTSPPYWRQRDYGFKGQIGREKTPEEYIGRLIVIFRELRAKLKDDGVFFLNIGDKYKNRYGKSHLLQIPYRLAAHMIKDGWKLLDIIIWYKPNHMPSSVKDRFTNTYEPVLVFGKSDENIYTKKHPVLKIPLQQTKWKHTAVFPEKLVSSLLSRCNLKDGDYILDPFAGTGTTGAVVKKMKYQLYPKDLNVILIEKGKKFLDIITERTGIKEIKELKSSEYTWEPVNDKLAFSEDKPLIIIEDTHGETFIAKNSEEFSRIIMGMLSEEFQDFHREDAVYFFGVKNWKLSDLVLPGLLIDHGFILRNMIIIEDGSSWYPVFMLVKDTTRVNYKFYIDRIRKKPKTVLPEKWNQEDFIGLIVNDNLSKKPRKGEVVDIISTYSQDNFPKIVAVSWEDDNISLELCLNPRKDEFIMESLQFTCPHCGTQLIDTYDPLGDNICYNCQKEIYGKNSLPILKESKEIIESLESVENGEYQVGENIKPQYQKRCKESKSKFAGMERMNWGASPGARKTIIGDSFSKMRLYRLDQPTIARYLNIYMKKNDLRIKDITQALPPEYKHTVGHWFRKDFGGSIPLPEDVTLLEEILKLDKEFARILKRSVLKLQTVKHSLKGKNPGDFLELEENKLKEYLTKTYMPPSYYIKK</sequence>
<organism>
    <name type="scientific">Methanothermobacter wolfeii</name>
    <name type="common">Methanobacterium wolfei</name>
    <dbReference type="NCBI Taxonomy" id="145261"/>
    <lineage>
        <taxon>Archaea</taxon>
        <taxon>Methanobacteriati</taxon>
        <taxon>Methanobacteriota</taxon>
        <taxon>Methanomada group</taxon>
        <taxon>Methanobacteria</taxon>
        <taxon>Methanobacteriales</taxon>
        <taxon>Methanobacteriaceae</taxon>
        <taxon>Methanothermobacter</taxon>
    </lineage>
</organism>
<comment type="function">
    <text evidence="1 4">A beta subtype methylase, recognizes the double-stranded DNA sequence 5'-GCNNNNNNNGC-3', methylates C-2 on both strands, and protects the DNA from cleavage by the MwoI endonuclease.</text>
</comment>
<comment type="catalytic activity">
    <reaction>
        <text>a 2'-deoxycytidine in DNA + S-adenosyl-L-methionine = an N(4)-methyl-2'-deoxycytidine in DNA + S-adenosyl-L-homocysteine + H(+)</text>
        <dbReference type="Rhea" id="RHEA:16857"/>
        <dbReference type="Rhea" id="RHEA-COMP:11369"/>
        <dbReference type="Rhea" id="RHEA-COMP:13674"/>
        <dbReference type="ChEBI" id="CHEBI:15378"/>
        <dbReference type="ChEBI" id="CHEBI:57856"/>
        <dbReference type="ChEBI" id="CHEBI:59789"/>
        <dbReference type="ChEBI" id="CHEBI:85452"/>
        <dbReference type="ChEBI" id="CHEBI:137933"/>
        <dbReference type="EC" id="2.1.1.113"/>
    </reaction>
</comment>
<comment type="similarity">
    <text evidence="3">Belongs to the N(4)/N(6)-methyltransferase family. N(4) subfamily.</text>
</comment>
<protein>
    <recommendedName>
        <fullName evidence="1">Type II methyltransferase M.MwoI</fullName>
        <shortName evidence="2">M.MwoI</shortName>
        <ecNumber>2.1.1.113</ecNumber>
    </recommendedName>
    <alternativeName>
        <fullName>Modification methylase MwoI</fullName>
    </alternativeName>
    <alternativeName>
        <fullName>N-4 cytosine-specific methyltransferase MwoI</fullName>
    </alternativeName>
</protein>
<name>MTMW_METWO</name>
<evidence type="ECO:0000303" key="1">
    <source>
    </source>
</evidence>
<evidence type="ECO:0000303" key="2">
    <source>
    </source>
</evidence>
<evidence type="ECO:0000305" key="3"/>
<evidence type="ECO:0000305" key="4">
    <source>
    </source>
</evidence>
<accession>O59647</accession>